<feature type="chain" id="PRO_1000130641" description="Nucleotide-binding protein PLES_47741">
    <location>
        <begin position="1"/>
        <end position="159"/>
    </location>
</feature>
<reference key="1">
    <citation type="journal article" date="2009" name="Genome Res.">
        <title>Newly introduced genomic prophage islands are critical determinants of in vivo competitiveness in the Liverpool epidemic strain of Pseudomonas aeruginosa.</title>
        <authorList>
            <person name="Winstanley C."/>
            <person name="Langille M.G.I."/>
            <person name="Fothergill J.L."/>
            <person name="Kukavica-Ibrulj I."/>
            <person name="Paradis-Bleau C."/>
            <person name="Sanschagrin F."/>
            <person name="Thomson N.R."/>
            <person name="Winsor G.L."/>
            <person name="Quail M.A."/>
            <person name="Lennard N."/>
            <person name="Bignell A."/>
            <person name="Clarke L."/>
            <person name="Seeger K."/>
            <person name="Saunders D."/>
            <person name="Harris D."/>
            <person name="Parkhill J."/>
            <person name="Hancock R.E.W."/>
            <person name="Brinkman F.S.L."/>
            <person name="Levesque R.C."/>
        </authorList>
    </citation>
    <scope>NUCLEOTIDE SEQUENCE [LARGE SCALE GENOMIC DNA]</scope>
    <source>
        <strain>LESB58</strain>
    </source>
</reference>
<name>Y4774_PSEA8</name>
<evidence type="ECO:0000255" key="1">
    <source>
        <dbReference type="HAMAP-Rule" id="MF_00632"/>
    </source>
</evidence>
<accession>B7UZH3</accession>
<keyword id="KW-0547">Nucleotide-binding</keyword>
<organism>
    <name type="scientific">Pseudomonas aeruginosa (strain LESB58)</name>
    <dbReference type="NCBI Taxonomy" id="557722"/>
    <lineage>
        <taxon>Bacteria</taxon>
        <taxon>Pseudomonadati</taxon>
        <taxon>Pseudomonadota</taxon>
        <taxon>Gammaproteobacteria</taxon>
        <taxon>Pseudomonadales</taxon>
        <taxon>Pseudomonadaceae</taxon>
        <taxon>Pseudomonas</taxon>
    </lineage>
</organism>
<comment type="function">
    <text evidence="1">Nucleotide-binding protein.</text>
</comment>
<comment type="similarity">
    <text evidence="1">Belongs to the YajQ family.</text>
</comment>
<proteinExistence type="inferred from homology"/>
<protein>
    <recommendedName>
        <fullName evidence="1">Nucleotide-binding protein PLES_47741</fullName>
    </recommendedName>
</protein>
<sequence>MPSFDVVSELDKHELTNAVDNAIKELDRRFDLKGKCSFEAKDKSVTLTAEADFMLEQMLDILRSNLVKRKVDSQCMEIKDAYPSGKVVKQDVNFREGIDKDLAKKIVGLIKERKLKVQAAIQGEQVRVTGKKRDDLQEAIALLRGESLGMPLQFTNFRD</sequence>
<dbReference type="EMBL" id="FM209186">
    <property type="protein sequence ID" value="CAW29528.1"/>
    <property type="molecule type" value="Genomic_DNA"/>
</dbReference>
<dbReference type="RefSeq" id="WP_003106526.1">
    <property type="nucleotide sequence ID" value="NC_011770.1"/>
</dbReference>
<dbReference type="SMR" id="B7UZH3"/>
<dbReference type="KEGG" id="pag:PLES_47741"/>
<dbReference type="HOGENOM" id="CLU_099839_1_0_6"/>
<dbReference type="GO" id="GO:0005829">
    <property type="term" value="C:cytosol"/>
    <property type="evidence" value="ECO:0007669"/>
    <property type="project" value="TreeGrafter"/>
</dbReference>
<dbReference type="GO" id="GO:0000166">
    <property type="term" value="F:nucleotide binding"/>
    <property type="evidence" value="ECO:0007669"/>
    <property type="project" value="TreeGrafter"/>
</dbReference>
<dbReference type="CDD" id="cd11740">
    <property type="entry name" value="YajQ_like"/>
    <property type="match status" value="1"/>
</dbReference>
<dbReference type="FunFam" id="3.30.70.860:FF:000001">
    <property type="entry name" value="UPF0234 protein YajQ"/>
    <property type="match status" value="1"/>
</dbReference>
<dbReference type="FunFam" id="3.30.70.990:FF:000001">
    <property type="entry name" value="UPF0234 protein YajQ"/>
    <property type="match status" value="1"/>
</dbReference>
<dbReference type="Gene3D" id="3.30.70.860">
    <property type="match status" value="1"/>
</dbReference>
<dbReference type="Gene3D" id="3.30.70.990">
    <property type="entry name" value="YajQ-like, domain 2"/>
    <property type="match status" value="1"/>
</dbReference>
<dbReference type="HAMAP" id="MF_00632">
    <property type="entry name" value="YajQ"/>
    <property type="match status" value="1"/>
</dbReference>
<dbReference type="InterPro" id="IPR007551">
    <property type="entry name" value="DUF520"/>
</dbReference>
<dbReference type="InterPro" id="IPR035571">
    <property type="entry name" value="UPF0234-like_C"/>
</dbReference>
<dbReference type="InterPro" id="IPR035570">
    <property type="entry name" value="UPF0234_N"/>
</dbReference>
<dbReference type="InterPro" id="IPR036183">
    <property type="entry name" value="YajQ-like_sf"/>
</dbReference>
<dbReference type="NCBIfam" id="NF003819">
    <property type="entry name" value="PRK05412.1"/>
    <property type="match status" value="1"/>
</dbReference>
<dbReference type="PANTHER" id="PTHR30476">
    <property type="entry name" value="UPF0234 PROTEIN YAJQ"/>
    <property type="match status" value="1"/>
</dbReference>
<dbReference type="PANTHER" id="PTHR30476:SF0">
    <property type="entry name" value="UPF0234 PROTEIN YAJQ"/>
    <property type="match status" value="1"/>
</dbReference>
<dbReference type="Pfam" id="PF04461">
    <property type="entry name" value="DUF520"/>
    <property type="match status" value="1"/>
</dbReference>
<dbReference type="SUPFAM" id="SSF89963">
    <property type="entry name" value="YajQ-like"/>
    <property type="match status" value="2"/>
</dbReference>
<gene>
    <name type="ordered locus">PLES_47741</name>
</gene>